<protein>
    <recommendedName>
        <fullName evidence="1">Transcriptional regulator SlyA</fullName>
    </recommendedName>
</protein>
<feature type="chain" id="PRO_0000054385" description="Transcriptional regulator SlyA">
    <location>
        <begin position="1"/>
        <end position="144"/>
    </location>
</feature>
<feature type="domain" description="HTH marR-type" evidence="1">
    <location>
        <begin position="2"/>
        <end position="135"/>
    </location>
</feature>
<feature type="DNA-binding region" description="H-T-H motif" evidence="1">
    <location>
        <begin position="49"/>
        <end position="72"/>
    </location>
</feature>
<keyword id="KW-0010">Activator</keyword>
<keyword id="KW-0238">DNA-binding</keyword>
<keyword id="KW-1185">Reference proteome</keyword>
<keyword id="KW-0678">Repressor</keyword>
<keyword id="KW-0804">Transcription</keyword>
<keyword id="KW-0805">Transcription regulation</keyword>
<name>SLYA_ECO27</name>
<organism>
    <name type="scientific">Escherichia coli O127:H6 (strain E2348/69 / EPEC)</name>
    <dbReference type="NCBI Taxonomy" id="574521"/>
    <lineage>
        <taxon>Bacteria</taxon>
        <taxon>Pseudomonadati</taxon>
        <taxon>Pseudomonadota</taxon>
        <taxon>Gammaproteobacteria</taxon>
        <taxon>Enterobacterales</taxon>
        <taxon>Enterobacteriaceae</taxon>
        <taxon>Escherichia</taxon>
    </lineage>
</organism>
<gene>
    <name evidence="1" type="primary">slyA</name>
    <name type="ordered locus">E2348C_1729</name>
</gene>
<accession>P0A4U5</accession>
<accession>B7URY3</accession>
<accession>Q8FH84</accession>
<accession>Q93M77</accession>
<evidence type="ECO:0000255" key="1">
    <source>
        <dbReference type="HAMAP-Rule" id="MF_01819"/>
    </source>
</evidence>
<evidence type="ECO:0000305" key="2"/>
<proteinExistence type="inferred from homology"/>
<comment type="function">
    <text evidence="1">Transcription regulator that can specifically activate or repress expression of target genes.</text>
</comment>
<comment type="subunit">
    <text evidence="1">Homodimer.</text>
</comment>
<comment type="similarity">
    <text evidence="1">Belongs to the SlyA family.</text>
</comment>
<comment type="sequence caution" evidence="2">
    <conflict type="erroneous initiation">
        <sequence resource="EMBL-CDS" id="AAF97817"/>
    </conflict>
    <text>Extended N-terminus.</text>
</comment>
<sequence>MESPLGSDLARLVRIWRALIDHRLKPLELTQTHWVTLHNIHQLPPDQSQIQLAKAIGIEQPSLVRTLDQLEEKGLISRQTCASDRRAKRIKLTEKAEPLISEMEAVINKTRAEILHGISAEELEQLIKLIAKLEHNIIELQAKG</sequence>
<reference key="1">
    <citation type="submission" date="2000-07" db="EMBL/GenBank/DDBJ databases">
        <title>Phase variation between type III protein secretion and motility in enteropathogenic Escherichia coli involves SlyA and EspA.</title>
        <authorList>
            <person name="Swift S."/>
            <person name="Baldwin T.J."/>
            <person name="Bishop K."/>
            <person name="Hyde S."/>
            <person name="Hill S."/>
            <person name="Hill P."/>
            <person name="Williams P."/>
        </authorList>
    </citation>
    <scope>NUCLEOTIDE SEQUENCE [GENOMIC DNA]</scope>
</reference>
<reference key="2">
    <citation type="journal article" date="2009" name="J. Bacteriol.">
        <title>Complete genome sequence and comparative genome analysis of enteropathogenic Escherichia coli O127:H6 strain E2348/69.</title>
        <authorList>
            <person name="Iguchi A."/>
            <person name="Thomson N.R."/>
            <person name="Ogura Y."/>
            <person name="Saunders D."/>
            <person name="Ooka T."/>
            <person name="Henderson I.R."/>
            <person name="Harris D."/>
            <person name="Asadulghani M."/>
            <person name="Kurokawa K."/>
            <person name="Dean P."/>
            <person name="Kenny B."/>
            <person name="Quail M.A."/>
            <person name="Thurston S."/>
            <person name="Dougan G."/>
            <person name="Hayashi T."/>
            <person name="Parkhill J."/>
            <person name="Frankel G."/>
        </authorList>
    </citation>
    <scope>NUCLEOTIDE SEQUENCE [LARGE SCALE GENOMIC DNA]</scope>
    <source>
        <strain>E2348/69 / EPEC</strain>
    </source>
</reference>
<dbReference type="EMBL" id="AY005813">
    <property type="protein sequence ID" value="AAF97817.1"/>
    <property type="status" value="ALT_INIT"/>
    <property type="molecule type" value="Genomic_DNA"/>
</dbReference>
<dbReference type="EMBL" id="FM180568">
    <property type="protein sequence ID" value="CAS09277.1"/>
    <property type="molecule type" value="Genomic_DNA"/>
</dbReference>
<dbReference type="RefSeq" id="WP_000445640.1">
    <property type="nucleotide sequence ID" value="NC_011601.1"/>
</dbReference>
<dbReference type="SMR" id="P0A4U5"/>
<dbReference type="KEGG" id="ecg:E2348C_1729"/>
<dbReference type="HOGENOM" id="CLU_083287_18_2_6"/>
<dbReference type="Proteomes" id="UP000008205">
    <property type="component" value="Chromosome"/>
</dbReference>
<dbReference type="GO" id="GO:0003677">
    <property type="term" value="F:DNA binding"/>
    <property type="evidence" value="ECO:0007669"/>
    <property type="project" value="UniProtKB-UniRule"/>
</dbReference>
<dbReference type="GO" id="GO:0003700">
    <property type="term" value="F:DNA-binding transcription factor activity"/>
    <property type="evidence" value="ECO:0007669"/>
    <property type="project" value="UniProtKB-UniRule"/>
</dbReference>
<dbReference type="GO" id="GO:0006950">
    <property type="term" value="P:response to stress"/>
    <property type="evidence" value="ECO:0007669"/>
    <property type="project" value="TreeGrafter"/>
</dbReference>
<dbReference type="FunFam" id="1.10.10.10:FF:000261">
    <property type="entry name" value="Transcriptional regulator SlyA"/>
    <property type="match status" value="1"/>
</dbReference>
<dbReference type="Gene3D" id="1.10.10.10">
    <property type="entry name" value="Winged helix-like DNA-binding domain superfamily/Winged helix DNA-binding domain"/>
    <property type="match status" value="1"/>
</dbReference>
<dbReference type="HAMAP" id="MF_01819">
    <property type="entry name" value="HTH_type_SlyA"/>
    <property type="match status" value="1"/>
</dbReference>
<dbReference type="InterPro" id="IPR000835">
    <property type="entry name" value="HTH_MarR-typ"/>
</dbReference>
<dbReference type="InterPro" id="IPR039422">
    <property type="entry name" value="MarR/SlyA-like"/>
</dbReference>
<dbReference type="InterPro" id="IPR023187">
    <property type="entry name" value="Tscrpt_reg_MarR-type_CS"/>
</dbReference>
<dbReference type="InterPro" id="IPR023071">
    <property type="entry name" value="Tscrpt_reg_SlyA"/>
</dbReference>
<dbReference type="InterPro" id="IPR036388">
    <property type="entry name" value="WH-like_DNA-bd_sf"/>
</dbReference>
<dbReference type="InterPro" id="IPR036390">
    <property type="entry name" value="WH_DNA-bd_sf"/>
</dbReference>
<dbReference type="NCBIfam" id="NF002926">
    <property type="entry name" value="PRK03573.1"/>
    <property type="match status" value="1"/>
</dbReference>
<dbReference type="PANTHER" id="PTHR33164:SF64">
    <property type="entry name" value="TRANSCRIPTIONAL REGULATOR SLYA"/>
    <property type="match status" value="1"/>
</dbReference>
<dbReference type="PANTHER" id="PTHR33164">
    <property type="entry name" value="TRANSCRIPTIONAL REGULATOR, MARR FAMILY"/>
    <property type="match status" value="1"/>
</dbReference>
<dbReference type="Pfam" id="PF01047">
    <property type="entry name" value="MarR"/>
    <property type="match status" value="1"/>
</dbReference>
<dbReference type="PRINTS" id="PR00598">
    <property type="entry name" value="HTHMARR"/>
</dbReference>
<dbReference type="SMART" id="SM00347">
    <property type="entry name" value="HTH_MARR"/>
    <property type="match status" value="1"/>
</dbReference>
<dbReference type="SUPFAM" id="SSF46785">
    <property type="entry name" value="Winged helix' DNA-binding domain"/>
    <property type="match status" value="1"/>
</dbReference>
<dbReference type="PROSITE" id="PS01117">
    <property type="entry name" value="HTH_MARR_1"/>
    <property type="match status" value="1"/>
</dbReference>
<dbReference type="PROSITE" id="PS50995">
    <property type="entry name" value="HTH_MARR_2"/>
    <property type="match status" value="1"/>
</dbReference>